<accession>A1W1A5</accession>
<name>PURA_CAMJJ</name>
<keyword id="KW-0963">Cytoplasm</keyword>
<keyword id="KW-0342">GTP-binding</keyword>
<keyword id="KW-0436">Ligase</keyword>
<keyword id="KW-0460">Magnesium</keyword>
<keyword id="KW-0479">Metal-binding</keyword>
<keyword id="KW-0547">Nucleotide-binding</keyword>
<keyword id="KW-0658">Purine biosynthesis</keyword>
<feature type="chain" id="PRO_1000000798" description="Adenylosuccinate synthetase">
    <location>
        <begin position="1"/>
        <end position="416"/>
    </location>
</feature>
<feature type="active site" description="Proton acceptor" evidence="1">
    <location>
        <position position="14"/>
    </location>
</feature>
<feature type="active site" description="Proton donor" evidence="1">
    <location>
        <position position="42"/>
    </location>
</feature>
<feature type="binding site" evidence="1">
    <location>
        <begin position="13"/>
        <end position="19"/>
    </location>
    <ligand>
        <name>GTP</name>
        <dbReference type="ChEBI" id="CHEBI:37565"/>
    </ligand>
</feature>
<feature type="binding site" description="in other chain" evidence="1">
    <location>
        <begin position="14"/>
        <end position="17"/>
    </location>
    <ligand>
        <name>IMP</name>
        <dbReference type="ChEBI" id="CHEBI:58053"/>
        <note>ligand shared between dimeric partners</note>
    </ligand>
</feature>
<feature type="binding site" evidence="1">
    <location>
        <position position="14"/>
    </location>
    <ligand>
        <name>Mg(2+)</name>
        <dbReference type="ChEBI" id="CHEBI:18420"/>
    </ligand>
</feature>
<feature type="binding site" description="in other chain" evidence="1">
    <location>
        <begin position="39"/>
        <end position="42"/>
    </location>
    <ligand>
        <name>IMP</name>
        <dbReference type="ChEBI" id="CHEBI:58053"/>
        <note>ligand shared between dimeric partners</note>
    </ligand>
</feature>
<feature type="binding site" evidence="1">
    <location>
        <begin position="41"/>
        <end position="43"/>
    </location>
    <ligand>
        <name>GTP</name>
        <dbReference type="ChEBI" id="CHEBI:37565"/>
    </ligand>
</feature>
<feature type="binding site" evidence="1">
    <location>
        <position position="41"/>
    </location>
    <ligand>
        <name>Mg(2+)</name>
        <dbReference type="ChEBI" id="CHEBI:18420"/>
    </ligand>
</feature>
<feature type="binding site" description="in other chain" evidence="1">
    <location>
        <position position="126"/>
    </location>
    <ligand>
        <name>IMP</name>
        <dbReference type="ChEBI" id="CHEBI:58053"/>
        <note>ligand shared between dimeric partners</note>
    </ligand>
</feature>
<feature type="binding site" evidence="1">
    <location>
        <position position="140"/>
    </location>
    <ligand>
        <name>IMP</name>
        <dbReference type="ChEBI" id="CHEBI:58053"/>
        <note>ligand shared between dimeric partners</note>
    </ligand>
</feature>
<feature type="binding site" description="in other chain" evidence="1">
    <location>
        <position position="220"/>
    </location>
    <ligand>
        <name>IMP</name>
        <dbReference type="ChEBI" id="CHEBI:58053"/>
        <note>ligand shared between dimeric partners</note>
    </ligand>
</feature>
<feature type="binding site" description="in other chain" evidence="1">
    <location>
        <position position="235"/>
    </location>
    <ligand>
        <name>IMP</name>
        <dbReference type="ChEBI" id="CHEBI:58053"/>
        <note>ligand shared between dimeric partners</note>
    </ligand>
</feature>
<feature type="binding site" evidence="1">
    <location>
        <begin position="295"/>
        <end position="301"/>
    </location>
    <ligand>
        <name>substrate</name>
    </ligand>
</feature>
<feature type="binding site" description="in other chain" evidence="1">
    <location>
        <position position="299"/>
    </location>
    <ligand>
        <name>IMP</name>
        <dbReference type="ChEBI" id="CHEBI:58053"/>
        <note>ligand shared between dimeric partners</note>
    </ligand>
</feature>
<feature type="binding site" evidence="1">
    <location>
        <position position="301"/>
    </location>
    <ligand>
        <name>GTP</name>
        <dbReference type="ChEBI" id="CHEBI:37565"/>
    </ligand>
</feature>
<feature type="binding site" evidence="1">
    <location>
        <begin position="327"/>
        <end position="329"/>
    </location>
    <ligand>
        <name>GTP</name>
        <dbReference type="ChEBI" id="CHEBI:37565"/>
    </ligand>
</feature>
<feature type="binding site" evidence="1">
    <location>
        <begin position="405"/>
        <end position="407"/>
    </location>
    <ligand>
        <name>GTP</name>
        <dbReference type="ChEBI" id="CHEBI:37565"/>
    </ligand>
</feature>
<reference key="1">
    <citation type="submission" date="2006-12" db="EMBL/GenBank/DDBJ databases">
        <authorList>
            <person name="Fouts D.E."/>
            <person name="Nelson K.E."/>
            <person name="Sebastian Y."/>
        </authorList>
    </citation>
    <scope>NUCLEOTIDE SEQUENCE [LARGE SCALE GENOMIC DNA]</scope>
    <source>
        <strain>81-176</strain>
    </source>
</reference>
<gene>
    <name evidence="1" type="primary">purA</name>
    <name type="ordered locus">CJJ81176_1490</name>
</gene>
<sequence>MSKADIIVGIQWGDEGKGKVVDKLCENYDFVCRSAGGHNAGHTIWVNGVRYALHLMPSGVLHPRCINIIGNGVVVSPEVLIAEMAQFENLKGRLYISDRAHLNLKHHSLIDIAKEKLKGKNAIGTTGKGIGPSYADKINRTGHRVGELLEPQRLCEALIKDFEANKTFFEMLEIEIPSAEELLADLKRFNEILTPYITDTTRMLWKALDEDKRVLLEGAQGSMLDIDHGTYPYVTSSSTISAGALTGLGLNPKEAGNIIGIVKAYATRVGNGAFPTEDKGEDGEKIAQIGKEIGVSTGRKRRCGWFDAVAVRYTARLNGLDALSLMKLDVLDGFEKIKICRAYEYKGMEIDYIPSDLENVQPIYEEMDGWDKVFGIKDYDLLPENAKKYIARLEELAGVKVKYISTSPERDDTIIL</sequence>
<proteinExistence type="inferred from homology"/>
<comment type="function">
    <text evidence="1">Plays an important role in the de novo pathway of purine nucleotide biosynthesis. Catalyzes the first committed step in the biosynthesis of AMP from IMP.</text>
</comment>
<comment type="catalytic activity">
    <reaction evidence="1">
        <text>IMP + L-aspartate + GTP = N(6)-(1,2-dicarboxyethyl)-AMP + GDP + phosphate + 2 H(+)</text>
        <dbReference type="Rhea" id="RHEA:15753"/>
        <dbReference type="ChEBI" id="CHEBI:15378"/>
        <dbReference type="ChEBI" id="CHEBI:29991"/>
        <dbReference type="ChEBI" id="CHEBI:37565"/>
        <dbReference type="ChEBI" id="CHEBI:43474"/>
        <dbReference type="ChEBI" id="CHEBI:57567"/>
        <dbReference type="ChEBI" id="CHEBI:58053"/>
        <dbReference type="ChEBI" id="CHEBI:58189"/>
        <dbReference type="EC" id="6.3.4.4"/>
    </reaction>
</comment>
<comment type="cofactor">
    <cofactor evidence="1">
        <name>Mg(2+)</name>
        <dbReference type="ChEBI" id="CHEBI:18420"/>
    </cofactor>
    <text evidence="1">Binds 1 Mg(2+) ion per subunit.</text>
</comment>
<comment type="pathway">
    <text evidence="1">Purine metabolism; AMP biosynthesis via de novo pathway; AMP from IMP: step 1/2.</text>
</comment>
<comment type="subunit">
    <text evidence="1">Homodimer.</text>
</comment>
<comment type="subcellular location">
    <subcellularLocation>
        <location evidence="1">Cytoplasm</location>
    </subcellularLocation>
</comment>
<comment type="similarity">
    <text evidence="1">Belongs to the adenylosuccinate synthetase family.</text>
</comment>
<organism>
    <name type="scientific">Campylobacter jejuni subsp. jejuni serotype O:23/36 (strain 81-176)</name>
    <dbReference type="NCBI Taxonomy" id="354242"/>
    <lineage>
        <taxon>Bacteria</taxon>
        <taxon>Pseudomonadati</taxon>
        <taxon>Campylobacterota</taxon>
        <taxon>Epsilonproteobacteria</taxon>
        <taxon>Campylobacterales</taxon>
        <taxon>Campylobacteraceae</taxon>
        <taxon>Campylobacter</taxon>
    </lineage>
</organism>
<dbReference type="EC" id="6.3.4.4" evidence="1"/>
<dbReference type="EMBL" id="CP000538">
    <property type="protein sequence ID" value="EAQ72519.1"/>
    <property type="molecule type" value="Genomic_DNA"/>
</dbReference>
<dbReference type="RefSeq" id="WP_002855302.1">
    <property type="nucleotide sequence ID" value="NC_008787.1"/>
</dbReference>
<dbReference type="SMR" id="A1W1A5"/>
<dbReference type="KEGG" id="cjj:CJJ81176_1490"/>
<dbReference type="eggNOG" id="COG0104">
    <property type="taxonomic scope" value="Bacteria"/>
</dbReference>
<dbReference type="HOGENOM" id="CLU_029848_0_0_7"/>
<dbReference type="UniPathway" id="UPA00075">
    <property type="reaction ID" value="UER00335"/>
</dbReference>
<dbReference type="Proteomes" id="UP000000646">
    <property type="component" value="Chromosome"/>
</dbReference>
<dbReference type="GO" id="GO:0005737">
    <property type="term" value="C:cytoplasm"/>
    <property type="evidence" value="ECO:0007669"/>
    <property type="project" value="UniProtKB-SubCell"/>
</dbReference>
<dbReference type="GO" id="GO:0004019">
    <property type="term" value="F:adenylosuccinate synthase activity"/>
    <property type="evidence" value="ECO:0007669"/>
    <property type="project" value="UniProtKB-UniRule"/>
</dbReference>
<dbReference type="GO" id="GO:0005525">
    <property type="term" value="F:GTP binding"/>
    <property type="evidence" value="ECO:0007669"/>
    <property type="project" value="UniProtKB-UniRule"/>
</dbReference>
<dbReference type="GO" id="GO:0000287">
    <property type="term" value="F:magnesium ion binding"/>
    <property type="evidence" value="ECO:0007669"/>
    <property type="project" value="UniProtKB-UniRule"/>
</dbReference>
<dbReference type="GO" id="GO:0044208">
    <property type="term" value="P:'de novo' AMP biosynthetic process"/>
    <property type="evidence" value="ECO:0007669"/>
    <property type="project" value="UniProtKB-UniRule"/>
</dbReference>
<dbReference type="GO" id="GO:0046040">
    <property type="term" value="P:IMP metabolic process"/>
    <property type="evidence" value="ECO:0007669"/>
    <property type="project" value="TreeGrafter"/>
</dbReference>
<dbReference type="CDD" id="cd03108">
    <property type="entry name" value="AdSS"/>
    <property type="match status" value="1"/>
</dbReference>
<dbReference type="FunFam" id="1.10.300.10:FF:000001">
    <property type="entry name" value="Adenylosuccinate synthetase"/>
    <property type="match status" value="1"/>
</dbReference>
<dbReference type="FunFam" id="3.90.170.10:FF:000001">
    <property type="entry name" value="Adenylosuccinate synthetase"/>
    <property type="match status" value="1"/>
</dbReference>
<dbReference type="Gene3D" id="3.40.440.10">
    <property type="entry name" value="Adenylosuccinate Synthetase, subunit A, domain 1"/>
    <property type="match status" value="1"/>
</dbReference>
<dbReference type="Gene3D" id="1.10.300.10">
    <property type="entry name" value="Adenylosuccinate Synthetase, subunit A, domain 2"/>
    <property type="match status" value="1"/>
</dbReference>
<dbReference type="Gene3D" id="3.90.170.10">
    <property type="entry name" value="Adenylosuccinate Synthetase, subunit A, domain 3"/>
    <property type="match status" value="1"/>
</dbReference>
<dbReference type="HAMAP" id="MF_00011">
    <property type="entry name" value="Adenylosucc_synth"/>
    <property type="match status" value="1"/>
</dbReference>
<dbReference type="InterPro" id="IPR018220">
    <property type="entry name" value="Adenylosuccin_syn_GTP-bd"/>
</dbReference>
<dbReference type="InterPro" id="IPR033128">
    <property type="entry name" value="Adenylosuccin_syn_Lys_AS"/>
</dbReference>
<dbReference type="InterPro" id="IPR042109">
    <property type="entry name" value="Adenylosuccinate_synth_dom1"/>
</dbReference>
<dbReference type="InterPro" id="IPR042110">
    <property type="entry name" value="Adenylosuccinate_synth_dom2"/>
</dbReference>
<dbReference type="InterPro" id="IPR042111">
    <property type="entry name" value="Adenylosuccinate_synth_dom3"/>
</dbReference>
<dbReference type="InterPro" id="IPR001114">
    <property type="entry name" value="Adenylosuccinate_synthetase"/>
</dbReference>
<dbReference type="InterPro" id="IPR027417">
    <property type="entry name" value="P-loop_NTPase"/>
</dbReference>
<dbReference type="NCBIfam" id="NF002223">
    <property type="entry name" value="PRK01117.1"/>
    <property type="match status" value="1"/>
</dbReference>
<dbReference type="NCBIfam" id="TIGR00184">
    <property type="entry name" value="purA"/>
    <property type="match status" value="1"/>
</dbReference>
<dbReference type="PANTHER" id="PTHR11846">
    <property type="entry name" value="ADENYLOSUCCINATE SYNTHETASE"/>
    <property type="match status" value="1"/>
</dbReference>
<dbReference type="PANTHER" id="PTHR11846:SF0">
    <property type="entry name" value="ADENYLOSUCCINATE SYNTHETASE"/>
    <property type="match status" value="1"/>
</dbReference>
<dbReference type="Pfam" id="PF00709">
    <property type="entry name" value="Adenylsucc_synt"/>
    <property type="match status" value="1"/>
</dbReference>
<dbReference type="SMART" id="SM00788">
    <property type="entry name" value="Adenylsucc_synt"/>
    <property type="match status" value="1"/>
</dbReference>
<dbReference type="SUPFAM" id="SSF52540">
    <property type="entry name" value="P-loop containing nucleoside triphosphate hydrolases"/>
    <property type="match status" value="1"/>
</dbReference>
<dbReference type="PROSITE" id="PS01266">
    <property type="entry name" value="ADENYLOSUCCIN_SYN_1"/>
    <property type="match status" value="1"/>
</dbReference>
<dbReference type="PROSITE" id="PS00513">
    <property type="entry name" value="ADENYLOSUCCIN_SYN_2"/>
    <property type="match status" value="1"/>
</dbReference>
<evidence type="ECO:0000255" key="1">
    <source>
        <dbReference type="HAMAP-Rule" id="MF_00011"/>
    </source>
</evidence>
<protein>
    <recommendedName>
        <fullName evidence="1">Adenylosuccinate synthetase</fullName>
        <shortName evidence="1">AMPSase</shortName>
        <shortName evidence="1">AdSS</shortName>
        <ecNumber evidence="1">6.3.4.4</ecNumber>
    </recommendedName>
    <alternativeName>
        <fullName evidence="1">IMP--aspartate ligase</fullName>
    </alternativeName>
</protein>